<comment type="function">
    <text evidence="1">Binds together with bS18 to 16S ribosomal RNA.</text>
</comment>
<comment type="similarity">
    <text evidence="2">Belongs to the bacterial ribosomal protein bS6 family.</text>
</comment>
<gene>
    <name type="primary">rpsF</name>
    <name type="ordered locus">NMB1323</name>
</gene>
<accession>Q9JZ29</accession>
<proteinExistence type="inferred from homology"/>
<evidence type="ECO:0000250" key="1"/>
<evidence type="ECO:0000305" key="2"/>
<sequence>MRHYEIVFIVHPDQSEQVPAMVERYKTMIAEANGKIHRLEDWGRRQLAYPINKIHKAHYVLMNIETTPEVVEELETAFRFNDAILRHLTIKTKHAVTEASPMLGGEKAKNLLSGASEEAVAQ</sequence>
<name>RS6_NEIMB</name>
<feature type="chain" id="PRO_0000176805" description="Small ribosomal subunit protein bS6">
    <location>
        <begin position="1"/>
        <end position="122"/>
    </location>
</feature>
<keyword id="KW-1185">Reference proteome</keyword>
<keyword id="KW-0687">Ribonucleoprotein</keyword>
<keyword id="KW-0689">Ribosomal protein</keyword>
<keyword id="KW-0694">RNA-binding</keyword>
<keyword id="KW-0699">rRNA-binding</keyword>
<dbReference type="EMBL" id="AE002098">
    <property type="protein sequence ID" value="AAF41698.1"/>
    <property type="molecule type" value="Genomic_DNA"/>
</dbReference>
<dbReference type="PIR" id="B81097">
    <property type="entry name" value="B81097"/>
</dbReference>
<dbReference type="RefSeq" id="NP_274342.1">
    <property type="nucleotide sequence ID" value="NC_003112.2"/>
</dbReference>
<dbReference type="RefSeq" id="WP_010980921.1">
    <property type="nucleotide sequence ID" value="NC_003112.2"/>
</dbReference>
<dbReference type="SMR" id="Q9JZ29"/>
<dbReference type="FunCoup" id="Q9JZ29">
    <property type="interactions" value="531"/>
</dbReference>
<dbReference type="STRING" id="122586.NMB1323"/>
<dbReference type="PaxDb" id="122586-NMB1323"/>
<dbReference type="KEGG" id="nme:NMB1323"/>
<dbReference type="PATRIC" id="fig|122586.8.peg.1659"/>
<dbReference type="HOGENOM" id="CLU_113441_6_1_4"/>
<dbReference type="InParanoid" id="Q9JZ29"/>
<dbReference type="OrthoDB" id="9812702at2"/>
<dbReference type="Proteomes" id="UP000000425">
    <property type="component" value="Chromosome"/>
</dbReference>
<dbReference type="GO" id="GO:0022627">
    <property type="term" value="C:cytosolic small ribosomal subunit"/>
    <property type="evidence" value="ECO:0000318"/>
    <property type="project" value="GO_Central"/>
</dbReference>
<dbReference type="GO" id="GO:0070181">
    <property type="term" value="F:small ribosomal subunit rRNA binding"/>
    <property type="evidence" value="ECO:0000318"/>
    <property type="project" value="GO_Central"/>
</dbReference>
<dbReference type="GO" id="GO:0003735">
    <property type="term" value="F:structural constituent of ribosome"/>
    <property type="evidence" value="ECO:0000318"/>
    <property type="project" value="GO_Central"/>
</dbReference>
<dbReference type="GO" id="GO:0006412">
    <property type="term" value="P:translation"/>
    <property type="evidence" value="ECO:0007669"/>
    <property type="project" value="UniProtKB-UniRule"/>
</dbReference>
<dbReference type="CDD" id="cd00473">
    <property type="entry name" value="bS6"/>
    <property type="match status" value="1"/>
</dbReference>
<dbReference type="FunFam" id="3.30.70.60:FF:000003">
    <property type="entry name" value="30S ribosomal protein S6"/>
    <property type="match status" value="1"/>
</dbReference>
<dbReference type="Gene3D" id="3.30.70.60">
    <property type="match status" value="1"/>
</dbReference>
<dbReference type="HAMAP" id="MF_00360">
    <property type="entry name" value="Ribosomal_bS6"/>
    <property type="match status" value="1"/>
</dbReference>
<dbReference type="InterPro" id="IPR000529">
    <property type="entry name" value="Ribosomal_bS6"/>
</dbReference>
<dbReference type="InterPro" id="IPR020815">
    <property type="entry name" value="Ribosomal_bS6_CS"/>
</dbReference>
<dbReference type="InterPro" id="IPR035980">
    <property type="entry name" value="Ribosomal_bS6_sf"/>
</dbReference>
<dbReference type="InterPro" id="IPR020814">
    <property type="entry name" value="Ribosomal_S6_plastid/chlpt"/>
</dbReference>
<dbReference type="InterPro" id="IPR014717">
    <property type="entry name" value="Transl_elong_EF1B/ribsomal_bS6"/>
</dbReference>
<dbReference type="NCBIfam" id="TIGR00166">
    <property type="entry name" value="S6"/>
    <property type="match status" value="1"/>
</dbReference>
<dbReference type="PANTHER" id="PTHR21011">
    <property type="entry name" value="MITOCHONDRIAL 28S RIBOSOMAL PROTEIN S6"/>
    <property type="match status" value="1"/>
</dbReference>
<dbReference type="PANTHER" id="PTHR21011:SF1">
    <property type="entry name" value="SMALL RIBOSOMAL SUBUNIT PROTEIN BS6M"/>
    <property type="match status" value="1"/>
</dbReference>
<dbReference type="Pfam" id="PF01250">
    <property type="entry name" value="Ribosomal_S6"/>
    <property type="match status" value="1"/>
</dbReference>
<dbReference type="SUPFAM" id="SSF54995">
    <property type="entry name" value="Ribosomal protein S6"/>
    <property type="match status" value="1"/>
</dbReference>
<dbReference type="PROSITE" id="PS01048">
    <property type="entry name" value="RIBOSOMAL_S6"/>
    <property type="match status" value="1"/>
</dbReference>
<protein>
    <recommendedName>
        <fullName evidence="2">Small ribosomal subunit protein bS6</fullName>
    </recommendedName>
    <alternativeName>
        <fullName>30S ribosomal protein S6</fullName>
    </alternativeName>
</protein>
<reference key="1">
    <citation type="journal article" date="2000" name="Science">
        <title>Complete genome sequence of Neisseria meningitidis serogroup B strain MC58.</title>
        <authorList>
            <person name="Tettelin H."/>
            <person name="Saunders N.J."/>
            <person name="Heidelberg J.F."/>
            <person name="Jeffries A.C."/>
            <person name="Nelson K.E."/>
            <person name="Eisen J.A."/>
            <person name="Ketchum K.A."/>
            <person name="Hood D.W."/>
            <person name="Peden J.F."/>
            <person name="Dodson R.J."/>
            <person name="Nelson W.C."/>
            <person name="Gwinn M.L."/>
            <person name="DeBoy R.T."/>
            <person name="Peterson J.D."/>
            <person name="Hickey E.K."/>
            <person name="Haft D.H."/>
            <person name="Salzberg S.L."/>
            <person name="White O."/>
            <person name="Fleischmann R.D."/>
            <person name="Dougherty B.A."/>
            <person name="Mason T.M."/>
            <person name="Ciecko A."/>
            <person name="Parksey D.S."/>
            <person name="Blair E."/>
            <person name="Cittone H."/>
            <person name="Clark E.B."/>
            <person name="Cotton M.D."/>
            <person name="Utterback T.R."/>
            <person name="Khouri H.M."/>
            <person name="Qin H."/>
            <person name="Vamathevan J.J."/>
            <person name="Gill J."/>
            <person name="Scarlato V."/>
            <person name="Masignani V."/>
            <person name="Pizza M."/>
            <person name="Grandi G."/>
            <person name="Sun L."/>
            <person name="Smith H.O."/>
            <person name="Fraser C.M."/>
            <person name="Moxon E.R."/>
            <person name="Rappuoli R."/>
            <person name="Venter J.C."/>
        </authorList>
    </citation>
    <scope>NUCLEOTIDE SEQUENCE [LARGE SCALE GENOMIC DNA]</scope>
    <source>
        <strain>ATCC BAA-335 / MC58</strain>
    </source>
</reference>
<organism>
    <name type="scientific">Neisseria meningitidis serogroup B (strain ATCC BAA-335 / MC58)</name>
    <dbReference type="NCBI Taxonomy" id="122586"/>
    <lineage>
        <taxon>Bacteria</taxon>
        <taxon>Pseudomonadati</taxon>
        <taxon>Pseudomonadota</taxon>
        <taxon>Betaproteobacteria</taxon>
        <taxon>Neisseriales</taxon>
        <taxon>Neisseriaceae</taxon>
        <taxon>Neisseria</taxon>
    </lineage>
</organism>